<sequence length="101" mass="11344">MIPGEIKTDAGDLQLNVGCEQLTVTVANSGDRPIQVGSHYHFYEVNPALKFEREKCRGYRLDITSGTAVRFEPGQQRQVTLIAYRGKRRVFGFRASIQGDL</sequence>
<dbReference type="EC" id="3.5.1.5" evidence="1"/>
<dbReference type="EMBL" id="CP000510">
    <property type="protein sequence ID" value="ABM04695.1"/>
    <property type="molecule type" value="Genomic_DNA"/>
</dbReference>
<dbReference type="RefSeq" id="WP_011771249.1">
    <property type="nucleotide sequence ID" value="NC_008709.1"/>
</dbReference>
<dbReference type="SMR" id="A1SYY0"/>
<dbReference type="STRING" id="357804.Ping_2993"/>
<dbReference type="KEGG" id="pin:Ping_2993"/>
<dbReference type="eggNOG" id="COG0832">
    <property type="taxonomic scope" value="Bacteria"/>
</dbReference>
<dbReference type="HOGENOM" id="CLU_129707_1_1_6"/>
<dbReference type="OrthoDB" id="9797217at2"/>
<dbReference type="UniPathway" id="UPA00258">
    <property type="reaction ID" value="UER00370"/>
</dbReference>
<dbReference type="Proteomes" id="UP000000639">
    <property type="component" value="Chromosome"/>
</dbReference>
<dbReference type="GO" id="GO:0035550">
    <property type="term" value="C:urease complex"/>
    <property type="evidence" value="ECO:0007669"/>
    <property type="project" value="InterPro"/>
</dbReference>
<dbReference type="GO" id="GO:0009039">
    <property type="term" value="F:urease activity"/>
    <property type="evidence" value="ECO:0007669"/>
    <property type="project" value="UniProtKB-UniRule"/>
</dbReference>
<dbReference type="GO" id="GO:0043419">
    <property type="term" value="P:urea catabolic process"/>
    <property type="evidence" value="ECO:0007669"/>
    <property type="project" value="UniProtKB-UniRule"/>
</dbReference>
<dbReference type="CDD" id="cd00407">
    <property type="entry name" value="Urease_beta"/>
    <property type="match status" value="1"/>
</dbReference>
<dbReference type="FunFam" id="2.10.150.10:FF:000001">
    <property type="entry name" value="Urease subunit beta"/>
    <property type="match status" value="1"/>
</dbReference>
<dbReference type="Gene3D" id="2.10.150.10">
    <property type="entry name" value="Urease, beta subunit"/>
    <property type="match status" value="1"/>
</dbReference>
<dbReference type="HAMAP" id="MF_01954">
    <property type="entry name" value="Urease_beta"/>
    <property type="match status" value="1"/>
</dbReference>
<dbReference type="InterPro" id="IPR002019">
    <property type="entry name" value="Urease_beta-like"/>
</dbReference>
<dbReference type="InterPro" id="IPR036461">
    <property type="entry name" value="Urease_betasu_sf"/>
</dbReference>
<dbReference type="InterPro" id="IPR050069">
    <property type="entry name" value="Urease_subunit"/>
</dbReference>
<dbReference type="NCBIfam" id="NF009682">
    <property type="entry name" value="PRK13203.1"/>
    <property type="match status" value="1"/>
</dbReference>
<dbReference type="NCBIfam" id="TIGR00192">
    <property type="entry name" value="urease_beta"/>
    <property type="match status" value="1"/>
</dbReference>
<dbReference type="PANTHER" id="PTHR33569">
    <property type="entry name" value="UREASE"/>
    <property type="match status" value="1"/>
</dbReference>
<dbReference type="PANTHER" id="PTHR33569:SF1">
    <property type="entry name" value="UREASE"/>
    <property type="match status" value="1"/>
</dbReference>
<dbReference type="Pfam" id="PF00699">
    <property type="entry name" value="Urease_beta"/>
    <property type="match status" value="1"/>
</dbReference>
<dbReference type="SUPFAM" id="SSF51278">
    <property type="entry name" value="Urease, beta-subunit"/>
    <property type="match status" value="1"/>
</dbReference>
<feature type="chain" id="PRO_1000070763" description="Urease subunit beta">
    <location>
        <begin position="1"/>
        <end position="101"/>
    </location>
</feature>
<comment type="catalytic activity">
    <reaction evidence="1">
        <text>urea + 2 H2O + H(+) = hydrogencarbonate + 2 NH4(+)</text>
        <dbReference type="Rhea" id="RHEA:20557"/>
        <dbReference type="ChEBI" id="CHEBI:15377"/>
        <dbReference type="ChEBI" id="CHEBI:15378"/>
        <dbReference type="ChEBI" id="CHEBI:16199"/>
        <dbReference type="ChEBI" id="CHEBI:17544"/>
        <dbReference type="ChEBI" id="CHEBI:28938"/>
        <dbReference type="EC" id="3.5.1.5"/>
    </reaction>
</comment>
<comment type="pathway">
    <text evidence="1">Nitrogen metabolism; urea degradation; CO(2) and NH(3) from urea (urease route): step 1/1.</text>
</comment>
<comment type="subunit">
    <text evidence="1">Heterotrimer of UreA (gamma), UreB (beta) and UreC (alpha) subunits. Three heterotrimers associate to form the active enzyme.</text>
</comment>
<comment type="subcellular location">
    <subcellularLocation>
        <location evidence="1">Cytoplasm</location>
    </subcellularLocation>
</comment>
<comment type="similarity">
    <text evidence="1">Belongs to the urease beta subunit family.</text>
</comment>
<name>URE2_PSYIN</name>
<evidence type="ECO:0000255" key="1">
    <source>
        <dbReference type="HAMAP-Rule" id="MF_01954"/>
    </source>
</evidence>
<proteinExistence type="inferred from homology"/>
<protein>
    <recommendedName>
        <fullName evidence="1">Urease subunit beta</fullName>
        <ecNumber evidence="1">3.5.1.5</ecNumber>
    </recommendedName>
    <alternativeName>
        <fullName evidence="1">Urea amidohydrolase subunit beta</fullName>
    </alternativeName>
</protein>
<reference key="1">
    <citation type="journal article" date="2008" name="BMC Genomics">
        <title>Genomics of an extreme psychrophile, Psychromonas ingrahamii.</title>
        <authorList>
            <person name="Riley M."/>
            <person name="Staley J.T."/>
            <person name="Danchin A."/>
            <person name="Wang T.Z."/>
            <person name="Brettin T.S."/>
            <person name="Hauser L.J."/>
            <person name="Land M.L."/>
            <person name="Thompson L.S."/>
        </authorList>
    </citation>
    <scope>NUCLEOTIDE SEQUENCE [LARGE SCALE GENOMIC DNA]</scope>
    <source>
        <strain>DSM 17664 / CCUG 51855 / 37</strain>
    </source>
</reference>
<keyword id="KW-0963">Cytoplasm</keyword>
<keyword id="KW-0378">Hydrolase</keyword>
<keyword id="KW-1185">Reference proteome</keyword>
<gene>
    <name evidence="1" type="primary">ureB</name>
    <name type="ordered locus">Ping_2993</name>
</gene>
<accession>A1SYY0</accession>
<organism>
    <name type="scientific">Psychromonas ingrahamii (strain DSM 17664 / CCUG 51855 / 37)</name>
    <dbReference type="NCBI Taxonomy" id="357804"/>
    <lineage>
        <taxon>Bacteria</taxon>
        <taxon>Pseudomonadati</taxon>
        <taxon>Pseudomonadota</taxon>
        <taxon>Gammaproteobacteria</taxon>
        <taxon>Alteromonadales</taxon>
        <taxon>Psychromonadaceae</taxon>
        <taxon>Psychromonas</taxon>
    </lineage>
</organism>